<geneLocation type="chloroplast"/>
<organism>
    <name type="scientific">Amborella trichopoda</name>
    <dbReference type="NCBI Taxonomy" id="13333"/>
    <lineage>
        <taxon>Eukaryota</taxon>
        <taxon>Viridiplantae</taxon>
        <taxon>Streptophyta</taxon>
        <taxon>Embryophyta</taxon>
        <taxon>Tracheophyta</taxon>
        <taxon>Spermatophyta</taxon>
        <taxon>Magnoliopsida</taxon>
        <taxon>Amborellales</taxon>
        <taxon>Amborellaceae</taxon>
        <taxon>Amborella</taxon>
    </lineage>
</organism>
<protein>
    <recommendedName>
        <fullName evidence="1">Photosystem II reaction center protein H</fullName>
        <shortName evidence="1">PSII-H</shortName>
    </recommendedName>
    <alternativeName>
        <fullName evidence="1">Photosystem II 10 kDa phosphoprotein</fullName>
    </alternativeName>
</protein>
<accession>Q70XX9</accession>
<comment type="function">
    <text evidence="1">One of the components of the core complex of photosystem II (PSII), required for its stability and/or assembly. PSII is a light-driven water:plastoquinone oxidoreductase that uses light energy to abstract electrons from H(2)O, generating O(2) and a proton gradient subsequently used for ATP formation. It consists of a core antenna complex that captures photons, and an electron transfer chain that converts photonic excitation into a charge separation.</text>
</comment>
<comment type="subunit">
    <text evidence="1">PSII is composed of 1 copy each of membrane proteins PsbA, PsbB, PsbC, PsbD, PsbE, PsbF, PsbH, PsbI, PsbJ, PsbK, PsbL, PsbM, PsbT, PsbX, PsbY, PsbZ, Psb30/Ycf12, at least 3 peripheral proteins of the oxygen-evolving complex and a large number of cofactors. It forms dimeric complexes.</text>
</comment>
<comment type="subcellular location">
    <subcellularLocation>
        <location evidence="1">Plastid</location>
        <location evidence="1">Chloroplast thylakoid membrane</location>
        <topology evidence="1">Single-pass membrane protein</topology>
    </subcellularLocation>
</comment>
<comment type="PTM">
    <text evidence="1">Phosphorylation is a light-dependent reaction catalyzed by a membrane-bound kinase; phosphorylation occurs on Thr residue(s) in the N-terminus of the protein.</text>
</comment>
<comment type="similarity">
    <text evidence="1">Belongs to the PsbH family.</text>
</comment>
<evidence type="ECO:0000255" key="1">
    <source>
        <dbReference type="HAMAP-Rule" id="MF_00752"/>
    </source>
</evidence>
<gene>
    <name evidence="1" type="primary">psbH</name>
</gene>
<proteinExistence type="inferred from homology"/>
<reference key="1">
    <citation type="journal article" date="2003" name="Mol. Biol. Evol.">
        <title>Analysis of the Amborella trichopoda chloroplast genome sequence suggests that Amborella is not a basal angiosperm.</title>
        <authorList>
            <person name="Goremykin V.V."/>
            <person name="Hirsch-Ernst K.I."/>
            <person name="Wolfl S."/>
            <person name="Hellwig F.H."/>
        </authorList>
    </citation>
    <scope>NUCLEOTIDE SEQUENCE [LARGE SCALE GENOMIC DNA]</scope>
</reference>
<sequence length="73" mass="7805">MVTQSVEDSSRSGPRRTIVGDLLKPLNSEYGKVAPGWGTTPFMGVAMALFAIFLSIILEIYNSSVLLDGISVS</sequence>
<keyword id="KW-0150">Chloroplast</keyword>
<keyword id="KW-0472">Membrane</keyword>
<keyword id="KW-0597">Phosphoprotein</keyword>
<keyword id="KW-0602">Photosynthesis</keyword>
<keyword id="KW-0604">Photosystem II</keyword>
<keyword id="KW-0934">Plastid</keyword>
<keyword id="KW-1185">Reference proteome</keyword>
<keyword id="KW-0793">Thylakoid</keyword>
<keyword id="KW-0812">Transmembrane</keyword>
<keyword id="KW-1133">Transmembrane helix</keyword>
<feature type="chain" id="PRO_0000070496" description="Photosystem II reaction center protein H">
    <location>
        <begin position="1"/>
        <end position="73"/>
    </location>
</feature>
<feature type="transmembrane region" description="Helical" evidence="1">
    <location>
        <begin position="41"/>
        <end position="61"/>
    </location>
</feature>
<feature type="modified residue" description="Phosphothreonine" evidence="1">
    <location>
        <position position="3"/>
    </location>
</feature>
<dbReference type="EMBL" id="AJ506156">
    <property type="protein sequence ID" value="CAD45135.1"/>
    <property type="molecule type" value="Genomic_DNA"/>
</dbReference>
<dbReference type="RefSeq" id="NP_904127.1">
    <property type="nucleotide sequence ID" value="NC_005086.1"/>
</dbReference>
<dbReference type="SMR" id="Q70XX9"/>
<dbReference type="STRING" id="13333.Q70XX9"/>
<dbReference type="GeneID" id="2546572"/>
<dbReference type="KEGG" id="atr:2546572"/>
<dbReference type="OrthoDB" id="1855002at2759"/>
<dbReference type="Proteomes" id="UP000017836">
    <property type="component" value="Chloroplast"/>
</dbReference>
<dbReference type="GO" id="GO:0009535">
    <property type="term" value="C:chloroplast thylakoid membrane"/>
    <property type="evidence" value="ECO:0007669"/>
    <property type="project" value="UniProtKB-SubCell"/>
</dbReference>
<dbReference type="GO" id="GO:0009523">
    <property type="term" value="C:photosystem II"/>
    <property type="evidence" value="ECO:0007669"/>
    <property type="project" value="UniProtKB-KW"/>
</dbReference>
<dbReference type="GO" id="GO:0042301">
    <property type="term" value="F:phosphate ion binding"/>
    <property type="evidence" value="ECO:0007669"/>
    <property type="project" value="InterPro"/>
</dbReference>
<dbReference type="GO" id="GO:0015979">
    <property type="term" value="P:photosynthesis"/>
    <property type="evidence" value="ECO:0007669"/>
    <property type="project" value="UniProtKB-UniRule"/>
</dbReference>
<dbReference type="GO" id="GO:0050821">
    <property type="term" value="P:protein stabilization"/>
    <property type="evidence" value="ECO:0007669"/>
    <property type="project" value="InterPro"/>
</dbReference>
<dbReference type="FunFam" id="1.20.5.880:FF:000001">
    <property type="entry name" value="Photosystem II reaction center protein H"/>
    <property type="match status" value="1"/>
</dbReference>
<dbReference type="Gene3D" id="1.20.5.880">
    <property type="entry name" value="Photosystem II reaction center protein H"/>
    <property type="match status" value="1"/>
</dbReference>
<dbReference type="HAMAP" id="MF_00752">
    <property type="entry name" value="PSII_PsbH"/>
    <property type="match status" value="1"/>
</dbReference>
<dbReference type="InterPro" id="IPR001056">
    <property type="entry name" value="PSII_PsbH"/>
</dbReference>
<dbReference type="InterPro" id="IPR036863">
    <property type="entry name" value="PSII_PsbH_sf"/>
</dbReference>
<dbReference type="NCBIfam" id="NF002728">
    <property type="entry name" value="PRK02624.1"/>
    <property type="match status" value="1"/>
</dbReference>
<dbReference type="PANTHER" id="PTHR34469">
    <property type="entry name" value="PHOTOSYSTEM II REACTION CENTER PROTEIN H"/>
    <property type="match status" value="1"/>
</dbReference>
<dbReference type="PANTHER" id="PTHR34469:SF4">
    <property type="entry name" value="PHOTOSYSTEM II REACTION CENTER PROTEIN H"/>
    <property type="match status" value="1"/>
</dbReference>
<dbReference type="Pfam" id="PF00737">
    <property type="entry name" value="PsbH"/>
    <property type="match status" value="1"/>
</dbReference>
<dbReference type="SUPFAM" id="SSF161025">
    <property type="entry name" value="Photosystem II 10 kDa phosphoprotein PsbH"/>
    <property type="match status" value="1"/>
</dbReference>
<name>PSBH_AMBTC</name>